<reference key="1">
    <citation type="submission" date="2005-10" db="EMBL/GenBank/DDBJ databases">
        <title>Complete sequence of Pelobacter carbinolicus DSM 2380.</title>
        <authorList>
            <person name="Copeland A."/>
            <person name="Lucas S."/>
            <person name="Lapidus A."/>
            <person name="Barry K."/>
            <person name="Detter J.C."/>
            <person name="Glavina T."/>
            <person name="Hammon N."/>
            <person name="Israni S."/>
            <person name="Pitluck S."/>
            <person name="Chertkov O."/>
            <person name="Schmutz J."/>
            <person name="Larimer F."/>
            <person name="Land M."/>
            <person name="Kyrpides N."/>
            <person name="Ivanova N."/>
            <person name="Richardson P."/>
        </authorList>
    </citation>
    <scope>NUCLEOTIDE SEQUENCE [LARGE SCALE GENOMIC DNA]</scope>
    <source>
        <strain>DSM 2380 / NBRC 103641 / GraBd1</strain>
    </source>
</reference>
<gene>
    <name evidence="1" type="primary">recX</name>
    <name type="ordered locus">Pcar_2407</name>
</gene>
<name>RECX_SYNC1</name>
<organism>
    <name type="scientific">Syntrophotalea carbinolica (strain DSM 2380 / NBRC 103641 / GraBd1)</name>
    <name type="common">Pelobacter carbinolicus</name>
    <dbReference type="NCBI Taxonomy" id="338963"/>
    <lineage>
        <taxon>Bacteria</taxon>
        <taxon>Pseudomonadati</taxon>
        <taxon>Thermodesulfobacteriota</taxon>
        <taxon>Desulfuromonadia</taxon>
        <taxon>Desulfuromonadales</taxon>
        <taxon>Syntrophotaleaceae</taxon>
        <taxon>Syntrophotalea</taxon>
    </lineage>
</organism>
<feature type="chain" id="PRO_1000073033" description="Regulatory protein RecX">
    <location>
        <begin position="1"/>
        <end position="153"/>
    </location>
</feature>
<proteinExistence type="inferred from homology"/>
<keyword id="KW-0963">Cytoplasm</keyword>
<keyword id="KW-1185">Reference proteome</keyword>
<sequence length="153" mass="18184">MAPRTDAWSSALRLLSRREYSEAMLRERLQRKGFDSDQIEHALERCRSYNYVNDERFARIRARQLLASGRAVGPALMADLRHQRIGDSIARKAINDLEEEFSQAEILKDLCQRRFPDFDFQTADDRSRRRVFNYLRRRGFASAVLFQYFSEER</sequence>
<accession>Q3A1W1</accession>
<dbReference type="EMBL" id="CP000142">
    <property type="protein sequence ID" value="ABA89646.3"/>
    <property type="molecule type" value="Genomic_DNA"/>
</dbReference>
<dbReference type="RefSeq" id="WP_011342172.1">
    <property type="nucleotide sequence ID" value="NC_007498.2"/>
</dbReference>
<dbReference type="SMR" id="Q3A1W1"/>
<dbReference type="STRING" id="338963.Pcar_2407"/>
<dbReference type="KEGG" id="pca:Pcar_2407"/>
<dbReference type="eggNOG" id="COG2137">
    <property type="taxonomic scope" value="Bacteria"/>
</dbReference>
<dbReference type="HOGENOM" id="CLU_066607_3_3_7"/>
<dbReference type="OrthoDB" id="9813859at2"/>
<dbReference type="Proteomes" id="UP000002534">
    <property type="component" value="Chromosome"/>
</dbReference>
<dbReference type="GO" id="GO:0005737">
    <property type="term" value="C:cytoplasm"/>
    <property type="evidence" value="ECO:0007669"/>
    <property type="project" value="UniProtKB-SubCell"/>
</dbReference>
<dbReference type="GO" id="GO:0006282">
    <property type="term" value="P:regulation of DNA repair"/>
    <property type="evidence" value="ECO:0007669"/>
    <property type="project" value="UniProtKB-UniRule"/>
</dbReference>
<dbReference type="Gene3D" id="1.10.10.10">
    <property type="entry name" value="Winged helix-like DNA-binding domain superfamily/Winged helix DNA-binding domain"/>
    <property type="match status" value="1"/>
</dbReference>
<dbReference type="HAMAP" id="MF_01114">
    <property type="entry name" value="RecX"/>
    <property type="match status" value="1"/>
</dbReference>
<dbReference type="InterPro" id="IPR053926">
    <property type="entry name" value="RecX_HTH_1st"/>
</dbReference>
<dbReference type="InterPro" id="IPR003783">
    <property type="entry name" value="Regulatory_RecX"/>
</dbReference>
<dbReference type="InterPro" id="IPR036388">
    <property type="entry name" value="WH-like_DNA-bd_sf"/>
</dbReference>
<dbReference type="PANTHER" id="PTHR33602">
    <property type="entry name" value="REGULATORY PROTEIN RECX FAMILY PROTEIN"/>
    <property type="match status" value="1"/>
</dbReference>
<dbReference type="PANTHER" id="PTHR33602:SF1">
    <property type="entry name" value="REGULATORY PROTEIN RECX FAMILY PROTEIN"/>
    <property type="match status" value="1"/>
</dbReference>
<dbReference type="Pfam" id="PF21982">
    <property type="entry name" value="RecX_HTH1"/>
    <property type="match status" value="1"/>
</dbReference>
<protein>
    <recommendedName>
        <fullName evidence="1">Regulatory protein RecX</fullName>
    </recommendedName>
</protein>
<comment type="function">
    <text evidence="1">Modulates RecA activity.</text>
</comment>
<comment type="subcellular location">
    <subcellularLocation>
        <location evidence="1">Cytoplasm</location>
    </subcellularLocation>
</comment>
<comment type="similarity">
    <text evidence="1">Belongs to the RecX family.</text>
</comment>
<evidence type="ECO:0000255" key="1">
    <source>
        <dbReference type="HAMAP-Rule" id="MF_01114"/>
    </source>
</evidence>